<keyword id="KW-1185">Reference proteome</keyword>
<keyword id="KW-0690">Ribosome biogenesis</keyword>
<accession>Q8TZI2</accession>
<organism>
    <name type="scientific">Pyrococcus furiosus (strain ATCC 43587 / DSM 3638 / JCM 8422 / Vc1)</name>
    <dbReference type="NCBI Taxonomy" id="186497"/>
    <lineage>
        <taxon>Archaea</taxon>
        <taxon>Methanobacteriati</taxon>
        <taxon>Methanobacteriota</taxon>
        <taxon>Thermococci</taxon>
        <taxon>Thermococcales</taxon>
        <taxon>Thermococcaceae</taxon>
        <taxon>Pyrococcus</taxon>
    </lineage>
</organism>
<proteinExistence type="inferred from homology"/>
<dbReference type="EMBL" id="AE009950">
    <property type="protein sequence ID" value="AAL82134.1"/>
    <property type="molecule type" value="Genomic_DNA"/>
</dbReference>
<dbReference type="RefSeq" id="WP_011013155.1">
    <property type="nucleotide sequence ID" value="NZ_CP023154.1"/>
</dbReference>
<dbReference type="SMR" id="Q8TZI2"/>
<dbReference type="STRING" id="186497.PF2010"/>
<dbReference type="PaxDb" id="186497-PF2010"/>
<dbReference type="KEGG" id="pfu:PF2010"/>
<dbReference type="PATRIC" id="fig|186497.12.peg.2087"/>
<dbReference type="eggNOG" id="arCOG03247">
    <property type="taxonomic scope" value="Archaea"/>
</dbReference>
<dbReference type="HOGENOM" id="CLU_107897_0_0_2"/>
<dbReference type="OrthoDB" id="117530at2157"/>
<dbReference type="PhylomeDB" id="Q8TZI2"/>
<dbReference type="Proteomes" id="UP000001013">
    <property type="component" value="Chromosome"/>
</dbReference>
<dbReference type="GO" id="GO:0019843">
    <property type="term" value="F:rRNA binding"/>
    <property type="evidence" value="ECO:0007669"/>
    <property type="project" value="InterPro"/>
</dbReference>
<dbReference type="GO" id="GO:0006364">
    <property type="term" value="P:rRNA processing"/>
    <property type="evidence" value="ECO:0007669"/>
    <property type="project" value="InterPro"/>
</dbReference>
<dbReference type="Gene3D" id="3.40.50.10480">
    <property type="entry name" value="Probable brix-domain ribosomal biogenesis protein"/>
    <property type="match status" value="1"/>
</dbReference>
<dbReference type="HAMAP" id="MF_00699">
    <property type="entry name" value="BriX"/>
    <property type="match status" value="1"/>
</dbReference>
<dbReference type="InterPro" id="IPR007109">
    <property type="entry name" value="Brix"/>
</dbReference>
<dbReference type="InterPro" id="IPR023548">
    <property type="entry name" value="Brix_dom_Rbsml_bgen_prot"/>
</dbReference>
<dbReference type="NCBIfam" id="NF003053">
    <property type="entry name" value="PRK03972.1"/>
    <property type="match status" value="1"/>
</dbReference>
<dbReference type="SMART" id="SM00879">
    <property type="entry name" value="Brix"/>
    <property type="match status" value="1"/>
</dbReference>
<dbReference type="SUPFAM" id="SSF52954">
    <property type="entry name" value="Class II aaRS ABD-related"/>
    <property type="match status" value="1"/>
</dbReference>
<dbReference type="PROSITE" id="PS50833">
    <property type="entry name" value="BRIX"/>
    <property type="match status" value="1"/>
</dbReference>
<feature type="chain" id="PRO_0000120277" description="Probable Brix domain-containing ribosomal biogenesis protein">
    <location>
        <begin position="1"/>
        <end position="223"/>
    </location>
</feature>
<feature type="domain" description="Brix" evidence="1">
    <location>
        <begin position="1"/>
        <end position="196"/>
    </location>
</feature>
<evidence type="ECO:0000255" key="1">
    <source>
        <dbReference type="HAMAP-Rule" id="MF_00699"/>
    </source>
</evidence>
<sequence length="223" mass="26070">MMLITTSHRPTRRTRSFGHDLERVFPNSLYLTRGKKTIQELLMEAYDRGYERLLILNVWKGNPLKMTFIKVHPEDWGYLGYLYLHGIKLQREMGFKGLNPIREDMPLVVTTAKRVGWDHIAFAQVFAELTTGKFVPRGDKSLTYIADKYDTDVIAVIERHPRGMVINFYRLDVTKDRPVGPLINVKIWIMEDGRRWDYKEALGIKVPRREKGEGQESSSENRD</sequence>
<gene>
    <name type="ordered locus">PF2010</name>
</gene>
<reference key="1">
    <citation type="journal article" date="1999" name="Genetics">
        <title>Divergence of the hyperthermophilic archaea Pyrococcus furiosus and P. horikoshii inferred from complete genomic sequences.</title>
        <authorList>
            <person name="Maeder D.L."/>
            <person name="Weiss R.B."/>
            <person name="Dunn D.M."/>
            <person name="Cherry J.L."/>
            <person name="Gonzalez J.M."/>
            <person name="DiRuggiero J."/>
            <person name="Robb F.T."/>
        </authorList>
    </citation>
    <scope>NUCLEOTIDE SEQUENCE [LARGE SCALE GENOMIC DNA]</scope>
    <source>
        <strain>ATCC 43587 / DSM 3638 / JCM 8422 / Vc1</strain>
    </source>
</reference>
<name>BRIX_PYRFU</name>
<protein>
    <recommendedName>
        <fullName evidence="1">Probable Brix domain-containing ribosomal biogenesis protein</fullName>
    </recommendedName>
</protein>
<comment type="function">
    <text evidence="1">Probably involved in the biogenesis of the ribosome.</text>
</comment>